<accession>A7X3V5</accession>
<evidence type="ECO:0000250" key="1"/>
<evidence type="ECO:0000255" key="2"/>
<evidence type="ECO:0000305" key="3"/>
<dbReference type="EMBL" id="AP009324">
    <property type="protein sequence ID" value="BAF78714.1"/>
    <property type="molecule type" value="Genomic_DNA"/>
</dbReference>
<dbReference type="RefSeq" id="WP_000992518.1">
    <property type="nucleotide sequence ID" value="NC_009782.1"/>
</dbReference>
<dbReference type="SMR" id="A7X3V5"/>
<dbReference type="KEGG" id="saw:SAHV_1831"/>
<dbReference type="HOGENOM" id="CLU_042384_0_0_9"/>
<dbReference type="GO" id="GO:0005886">
    <property type="term" value="C:plasma membrane"/>
    <property type="evidence" value="ECO:0007669"/>
    <property type="project" value="UniProtKB-SubCell"/>
</dbReference>
<dbReference type="InterPro" id="IPR007383">
    <property type="entry name" value="DUF445"/>
</dbReference>
<dbReference type="InterPro" id="IPR016991">
    <property type="entry name" value="UCP032178"/>
</dbReference>
<dbReference type="PANTHER" id="PTHR35791">
    <property type="entry name" value="UPF0754 MEMBRANE PROTEIN YHEB"/>
    <property type="match status" value="1"/>
</dbReference>
<dbReference type="PANTHER" id="PTHR35791:SF1">
    <property type="entry name" value="UPF0754 MEMBRANE PROTEIN YHEB"/>
    <property type="match status" value="1"/>
</dbReference>
<dbReference type="Pfam" id="PF04286">
    <property type="entry name" value="DUF445"/>
    <property type="match status" value="1"/>
</dbReference>
<dbReference type="PIRSF" id="PIRSF032178">
    <property type="entry name" value="UCP032178"/>
    <property type="match status" value="1"/>
</dbReference>
<feature type="chain" id="PRO_0000388310" description="UPF0754 membrane protein SAHV_1831">
    <location>
        <begin position="1"/>
        <end position="374"/>
    </location>
</feature>
<feature type="transmembrane region" description="Helical" evidence="2">
    <location>
        <begin position="4"/>
        <end position="24"/>
    </location>
</feature>
<feature type="transmembrane region" description="Helical" evidence="2">
    <location>
        <begin position="354"/>
        <end position="374"/>
    </location>
</feature>
<proteinExistence type="inferred from homology"/>
<reference key="1">
    <citation type="journal article" date="2008" name="Antimicrob. Agents Chemother.">
        <title>Mutated response regulator graR is responsible for phenotypic conversion of Staphylococcus aureus from heterogeneous vancomycin-intermediate resistance to vancomycin-intermediate resistance.</title>
        <authorList>
            <person name="Neoh H.-M."/>
            <person name="Cui L."/>
            <person name="Yuzawa H."/>
            <person name="Takeuchi F."/>
            <person name="Matsuo M."/>
            <person name="Hiramatsu K."/>
        </authorList>
    </citation>
    <scope>NUCLEOTIDE SEQUENCE [LARGE SCALE GENOMIC DNA]</scope>
    <source>
        <strain>Mu3 / ATCC 700698</strain>
    </source>
</reference>
<keyword id="KW-1003">Cell membrane</keyword>
<keyword id="KW-0472">Membrane</keyword>
<keyword id="KW-0812">Transmembrane</keyword>
<keyword id="KW-1133">Transmembrane helix</keyword>
<comment type="subcellular location">
    <subcellularLocation>
        <location evidence="1">Cell membrane</location>
        <topology evidence="1">Multi-pass membrane protein</topology>
    </subcellularLocation>
</comment>
<comment type="similarity">
    <text evidence="3">Belongs to the UPF0754 family.</text>
</comment>
<protein>
    <recommendedName>
        <fullName>UPF0754 membrane protein SAHV_1831</fullName>
    </recommendedName>
</protein>
<organism>
    <name type="scientific">Staphylococcus aureus (strain Mu3 / ATCC 700698)</name>
    <dbReference type="NCBI Taxonomy" id="418127"/>
    <lineage>
        <taxon>Bacteria</taxon>
        <taxon>Bacillati</taxon>
        <taxon>Bacillota</taxon>
        <taxon>Bacilli</taxon>
        <taxon>Bacillales</taxon>
        <taxon>Staphylococcaceae</taxon>
        <taxon>Staphylococcus</taxon>
    </lineage>
</organism>
<gene>
    <name type="ordered locus">SAHV_1831</name>
</gene>
<name>Y1831_STAA1</name>
<sequence length="374" mass="42706">MNALFIIIFMIVVGAIIGGITNVIAIRMLFHPFKPYYIFKFRVPFTPGLIPKRREEIATKIGQVIEEHLLTETLINEKLKSEQSQQAIESMIQQQLQKLTKDQLSIKQITSQIDIDLEQVLQTNGNQYIESQLNNYYTKHQNQTIASLLPNQLVTFLDQHVDNATDLLCDRARNYLSSAKGTQDINDMLDTFFHEKGKLIGMLQMFMTKESIADRIQQELIRLTSHPKARTIVTSLITNEYQTFKDKPLNELLDASQFNEIAENLSVYVTTYASNQANKPVVTLMPQFVDYLEGQLSSKLANLIIEKLSIHLSTIMKKVDLRGLIEEQINTFDLDYIEKLIIEIANKELKLIMSLGFILGGIIGFFQGLVAIFV</sequence>